<reference key="1">
    <citation type="journal article" date="2006" name="J. Bacteriol.">
        <title>Comparative genomic analysis of three strains of Ehrlichia ruminantium reveals an active process of genome size plasticity.</title>
        <authorList>
            <person name="Frutos R."/>
            <person name="Viari A."/>
            <person name="Ferraz C."/>
            <person name="Morgat A."/>
            <person name="Eychenie S."/>
            <person name="Kandassamy Y."/>
            <person name="Chantal I."/>
            <person name="Bensaid A."/>
            <person name="Coissac E."/>
            <person name="Vachiery N."/>
            <person name="Demaille J."/>
            <person name="Martinez D."/>
        </authorList>
    </citation>
    <scope>NUCLEOTIDE SEQUENCE [LARGE SCALE GENOMIC DNA]</scope>
    <source>
        <strain>Gardel</strain>
    </source>
</reference>
<organism>
    <name type="scientific">Ehrlichia ruminantium (strain Gardel)</name>
    <dbReference type="NCBI Taxonomy" id="302409"/>
    <lineage>
        <taxon>Bacteria</taxon>
        <taxon>Pseudomonadati</taxon>
        <taxon>Pseudomonadota</taxon>
        <taxon>Alphaproteobacteria</taxon>
        <taxon>Rickettsiales</taxon>
        <taxon>Anaplasmataceae</taxon>
        <taxon>Ehrlichia</taxon>
    </lineage>
</organism>
<sequence>MIVGIGIDVVYIPRILNLWKKFGNKFLKKVFSQEEIKDSNKYTSCEGKARHFAKRFAAKEAYVKALGTGFGKSIKMSDITTYNTLHGKPQITVKKSNIDYKAELSLSDDTDYAIAFIILHKES</sequence>
<keyword id="KW-0963">Cytoplasm</keyword>
<keyword id="KW-0275">Fatty acid biosynthesis</keyword>
<keyword id="KW-0276">Fatty acid metabolism</keyword>
<keyword id="KW-0444">Lipid biosynthesis</keyword>
<keyword id="KW-0443">Lipid metabolism</keyword>
<keyword id="KW-0460">Magnesium</keyword>
<keyword id="KW-0479">Metal-binding</keyword>
<keyword id="KW-0808">Transferase</keyword>
<name>ACPS_EHRRG</name>
<accession>Q5FHL6</accession>
<protein>
    <recommendedName>
        <fullName evidence="1">Holo-[acyl-carrier-protein] synthase</fullName>
        <shortName evidence="1">Holo-ACP synthase</shortName>
        <ecNumber evidence="1">2.7.8.7</ecNumber>
    </recommendedName>
    <alternativeName>
        <fullName evidence="1">4'-phosphopantetheinyl transferase AcpS</fullName>
    </alternativeName>
</protein>
<gene>
    <name evidence="1" type="primary">acpS</name>
    <name type="ordered locus">ERGA_CDS_03460</name>
</gene>
<comment type="function">
    <text evidence="1">Transfers the 4'-phosphopantetheine moiety from coenzyme A to a Ser of acyl-carrier-protein.</text>
</comment>
<comment type="catalytic activity">
    <reaction evidence="1">
        <text>apo-[ACP] + CoA = holo-[ACP] + adenosine 3',5'-bisphosphate + H(+)</text>
        <dbReference type="Rhea" id="RHEA:12068"/>
        <dbReference type="Rhea" id="RHEA-COMP:9685"/>
        <dbReference type="Rhea" id="RHEA-COMP:9690"/>
        <dbReference type="ChEBI" id="CHEBI:15378"/>
        <dbReference type="ChEBI" id="CHEBI:29999"/>
        <dbReference type="ChEBI" id="CHEBI:57287"/>
        <dbReference type="ChEBI" id="CHEBI:58343"/>
        <dbReference type="ChEBI" id="CHEBI:64479"/>
        <dbReference type="EC" id="2.7.8.7"/>
    </reaction>
</comment>
<comment type="cofactor">
    <cofactor evidence="1">
        <name>Mg(2+)</name>
        <dbReference type="ChEBI" id="CHEBI:18420"/>
    </cofactor>
</comment>
<comment type="subcellular location">
    <subcellularLocation>
        <location evidence="1">Cytoplasm</location>
    </subcellularLocation>
</comment>
<comment type="similarity">
    <text evidence="1">Belongs to the P-Pant transferase superfamily. AcpS family.</text>
</comment>
<dbReference type="EC" id="2.7.8.7" evidence="1"/>
<dbReference type="EMBL" id="CR925677">
    <property type="protein sequence ID" value="CAI27798.1"/>
    <property type="molecule type" value="Genomic_DNA"/>
</dbReference>
<dbReference type="RefSeq" id="WP_011255496.1">
    <property type="nucleotide sequence ID" value="NC_006831.1"/>
</dbReference>
<dbReference type="SMR" id="Q5FHL6"/>
<dbReference type="KEGG" id="erg:ERGA_CDS_03460"/>
<dbReference type="HOGENOM" id="CLU_089696_1_2_5"/>
<dbReference type="OrthoDB" id="517356at2"/>
<dbReference type="Proteomes" id="UP000000533">
    <property type="component" value="Chromosome"/>
</dbReference>
<dbReference type="GO" id="GO:0005829">
    <property type="term" value="C:cytosol"/>
    <property type="evidence" value="ECO:0007669"/>
    <property type="project" value="TreeGrafter"/>
</dbReference>
<dbReference type="GO" id="GO:0008897">
    <property type="term" value="F:holo-[acyl-carrier-protein] synthase activity"/>
    <property type="evidence" value="ECO:0007669"/>
    <property type="project" value="UniProtKB-UniRule"/>
</dbReference>
<dbReference type="GO" id="GO:0000287">
    <property type="term" value="F:magnesium ion binding"/>
    <property type="evidence" value="ECO:0007669"/>
    <property type="project" value="UniProtKB-UniRule"/>
</dbReference>
<dbReference type="GO" id="GO:0006633">
    <property type="term" value="P:fatty acid biosynthetic process"/>
    <property type="evidence" value="ECO:0007669"/>
    <property type="project" value="UniProtKB-UniRule"/>
</dbReference>
<dbReference type="GO" id="GO:0019878">
    <property type="term" value="P:lysine biosynthetic process via aminoadipic acid"/>
    <property type="evidence" value="ECO:0007669"/>
    <property type="project" value="TreeGrafter"/>
</dbReference>
<dbReference type="Gene3D" id="3.90.470.20">
    <property type="entry name" value="4'-phosphopantetheinyl transferase domain"/>
    <property type="match status" value="1"/>
</dbReference>
<dbReference type="HAMAP" id="MF_00101">
    <property type="entry name" value="AcpS"/>
    <property type="match status" value="1"/>
</dbReference>
<dbReference type="InterPro" id="IPR008278">
    <property type="entry name" value="4-PPantetheinyl_Trfase_dom"/>
</dbReference>
<dbReference type="InterPro" id="IPR037143">
    <property type="entry name" value="4-PPantetheinyl_Trfase_dom_sf"/>
</dbReference>
<dbReference type="InterPro" id="IPR002582">
    <property type="entry name" value="ACPS"/>
</dbReference>
<dbReference type="InterPro" id="IPR050559">
    <property type="entry name" value="P-Pant_transferase_sf"/>
</dbReference>
<dbReference type="InterPro" id="IPR004568">
    <property type="entry name" value="Ppantetheine-prot_Trfase_dom"/>
</dbReference>
<dbReference type="NCBIfam" id="TIGR00516">
    <property type="entry name" value="acpS"/>
    <property type="match status" value="1"/>
</dbReference>
<dbReference type="NCBIfam" id="TIGR00556">
    <property type="entry name" value="pantethn_trn"/>
    <property type="match status" value="1"/>
</dbReference>
<dbReference type="NCBIfam" id="NF011253">
    <property type="entry name" value="PRK14659.1"/>
    <property type="match status" value="1"/>
</dbReference>
<dbReference type="PANTHER" id="PTHR12215:SF10">
    <property type="entry name" value="L-AMINOADIPATE-SEMIALDEHYDE DEHYDROGENASE-PHOSPHOPANTETHEINYL TRANSFERASE"/>
    <property type="match status" value="1"/>
</dbReference>
<dbReference type="PANTHER" id="PTHR12215">
    <property type="entry name" value="PHOSPHOPANTETHEINE TRANSFERASE"/>
    <property type="match status" value="1"/>
</dbReference>
<dbReference type="Pfam" id="PF01648">
    <property type="entry name" value="ACPS"/>
    <property type="match status" value="1"/>
</dbReference>
<dbReference type="SUPFAM" id="SSF56214">
    <property type="entry name" value="4'-phosphopantetheinyl transferase"/>
    <property type="match status" value="1"/>
</dbReference>
<proteinExistence type="inferred from homology"/>
<evidence type="ECO:0000255" key="1">
    <source>
        <dbReference type="HAMAP-Rule" id="MF_00101"/>
    </source>
</evidence>
<feature type="chain" id="PRO_0000228286" description="Holo-[acyl-carrier-protein] synthase">
    <location>
        <begin position="1"/>
        <end position="123"/>
    </location>
</feature>
<feature type="binding site" evidence="1">
    <location>
        <position position="8"/>
    </location>
    <ligand>
        <name>Mg(2+)</name>
        <dbReference type="ChEBI" id="CHEBI:18420"/>
    </ligand>
</feature>
<feature type="binding site" evidence="1">
    <location>
        <position position="60"/>
    </location>
    <ligand>
        <name>Mg(2+)</name>
        <dbReference type="ChEBI" id="CHEBI:18420"/>
    </ligand>
</feature>